<reference key="1">
    <citation type="journal article" date="2003" name="Nature">
        <title>Genome divergence in two Prochlorococcus ecotypes reflects oceanic niche differentiation.</title>
        <authorList>
            <person name="Rocap G."/>
            <person name="Larimer F.W."/>
            <person name="Lamerdin J.E."/>
            <person name="Malfatti S."/>
            <person name="Chain P."/>
            <person name="Ahlgren N.A."/>
            <person name="Arellano A."/>
            <person name="Coleman M."/>
            <person name="Hauser L."/>
            <person name="Hess W.R."/>
            <person name="Johnson Z.I."/>
            <person name="Land M.L."/>
            <person name="Lindell D."/>
            <person name="Post A.F."/>
            <person name="Regala W."/>
            <person name="Shah M."/>
            <person name="Shaw S.L."/>
            <person name="Steglich C."/>
            <person name="Sullivan M.B."/>
            <person name="Ting C.S."/>
            <person name="Tolonen A."/>
            <person name="Webb E.A."/>
            <person name="Zinser E.R."/>
            <person name="Chisholm S.W."/>
        </authorList>
    </citation>
    <scope>NUCLEOTIDE SEQUENCE [LARGE SCALE GENOMIC DNA]</scope>
    <source>
        <strain>CCMP1986 / NIES-2087 / MED4</strain>
    </source>
</reference>
<organism>
    <name type="scientific">Prochlorococcus marinus subsp. pastoris (strain CCMP1986 / NIES-2087 / MED4)</name>
    <dbReference type="NCBI Taxonomy" id="59919"/>
    <lineage>
        <taxon>Bacteria</taxon>
        <taxon>Bacillati</taxon>
        <taxon>Cyanobacteriota</taxon>
        <taxon>Cyanophyceae</taxon>
        <taxon>Synechococcales</taxon>
        <taxon>Prochlorococcaceae</taxon>
        <taxon>Prochlorococcus</taxon>
    </lineage>
</organism>
<protein>
    <recommendedName>
        <fullName evidence="1">Large ribosomal subunit protein uL1</fullName>
    </recommendedName>
    <alternativeName>
        <fullName evidence="2">50S ribosomal protein L1</fullName>
    </alternativeName>
</protein>
<keyword id="KW-0678">Repressor</keyword>
<keyword id="KW-0687">Ribonucleoprotein</keyword>
<keyword id="KW-0689">Ribosomal protein</keyword>
<keyword id="KW-0694">RNA-binding</keyword>
<keyword id="KW-0699">rRNA-binding</keyword>
<keyword id="KW-0810">Translation regulation</keyword>
<keyword id="KW-0820">tRNA-binding</keyword>
<dbReference type="EMBL" id="BX548174">
    <property type="protein sequence ID" value="CAE18662.1"/>
    <property type="molecule type" value="Genomic_DNA"/>
</dbReference>
<dbReference type="RefSeq" id="WP_011131842.1">
    <property type="nucleotide sequence ID" value="NC_005072.1"/>
</dbReference>
<dbReference type="SMR" id="Q7V382"/>
<dbReference type="STRING" id="59919.PMM0203"/>
<dbReference type="KEGG" id="pmm:PMM0203"/>
<dbReference type="eggNOG" id="COG0081">
    <property type="taxonomic scope" value="Bacteria"/>
</dbReference>
<dbReference type="HOGENOM" id="CLU_062853_0_0_3"/>
<dbReference type="OrthoDB" id="9803740at2"/>
<dbReference type="Proteomes" id="UP000001026">
    <property type="component" value="Chromosome"/>
</dbReference>
<dbReference type="GO" id="GO:0015934">
    <property type="term" value="C:large ribosomal subunit"/>
    <property type="evidence" value="ECO:0007669"/>
    <property type="project" value="InterPro"/>
</dbReference>
<dbReference type="GO" id="GO:0019843">
    <property type="term" value="F:rRNA binding"/>
    <property type="evidence" value="ECO:0007669"/>
    <property type="project" value="UniProtKB-UniRule"/>
</dbReference>
<dbReference type="GO" id="GO:0003735">
    <property type="term" value="F:structural constituent of ribosome"/>
    <property type="evidence" value="ECO:0007669"/>
    <property type="project" value="InterPro"/>
</dbReference>
<dbReference type="GO" id="GO:0000049">
    <property type="term" value="F:tRNA binding"/>
    <property type="evidence" value="ECO:0007669"/>
    <property type="project" value="UniProtKB-KW"/>
</dbReference>
<dbReference type="GO" id="GO:0006417">
    <property type="term" value="P:regulation of translation"/>
    <property type="evidence" value="ECO:0007669"/>
    <property type="project" value="UniProtKB-KW"/>
</dbReference>
<dbReference type="GO" id="GO:0006412">
    <property type="term" value="P:translation"/>
    <property type="evidence" value="ECO:0007669"/>
    <property type="project" value="UniProtKB-UniRule"/>
</dbReference>
<dbReference type="CDD" id="cd00403">
    <property type="entry name" value="Ribosomal_L1"/>
    <property type="match status" value="1"/>
</dbReference>
<dbReference type="FunFam" id="3.40.50.790:FF:000001">
    <property type="entry name" value="50S ribosomal protein L1"/>
    <property type="match status" value="1"/>
</dbReference>
<dbReference type="Gene3D" id="3.30.190.20">
    <property type="match status" value="1"/>
</dbReference>
<dbReference type="Gene3D" id="3.40.50.790">
    <property type="match status" value="1"/>
</dbReference>
<dbReference type="HAMAP" id="MF_01318_B">
    <property type="entry name" value="Ribosomal_uL1_B"/>
    <property type="match status" value="1"/>
</dbReference>
<dbReference type="InterPro" id="IPR005878">
    <property type="entry name" value="Ribosom_uL1_bac-type"/>
</dbReference>
<dbReference type="InterPro" id="IPR002143">
    <property type="entry name" value="Ribosomal_uL1"/>
</dbReference>
<dbReference type="InterPro" id="IPR023674">
    <property type="entry name" value="Ribosomal_uL1-like"/>
</dbReference>
<dbReference type="InterPro" id="IPR028364">
    <property type="entry name" value="Ribosomal_uL1/biogenesis"/>
</dbReference>
<dbReference type="InterPro" id="IPR016095">
    <property type="entry name" value="Ribosomal_uL1_3-a/b-sand"/>
</dbReference>
<dbReference type="InterPro" id="IPR023673">
    <property type="entry name" value="Ribosomal_uL1_CS"/>
</dbReference>
<dbReference type="NCBIfam" id="TIGR01169">
    <property type="entry name" value="rplA_bact"/>
    <property type="match status" value="1"/>
</dbReference>
<dbReference type="PANTHER" id="PTHR36427">
    <property type="entry name" value="54S RIBOSOMAL PROTEIN L1, MITOCHONDRIAL"/>
    <property type="match status" value="1"/>
</dbReference>
<dbReference type="PANTHER" id="PTHR36427:SF3">
    <property type="entry name" value="LARGE RIBOSOMAL SUBUNIT PROTEIN UL1M"/>
    <property type="match status" value="1"/>
</dbReference>
<dbReference type="Pfam" id="PF00687">
    <property type="entry name" value="Ribosomal_L1"/>
    <property type="match status" value="1"/>
</dbReference>
<dbReference type="PIRSF" id="PIRSF002155">
    <property type="entry name" value="Ribosomal_L1"/>
    <property type="match status" value="1"/>
</dbReference>
<dbReference type="SUPFAM" id="SSF56808">
    <property type="entry name" value="Ribosomal protein L1"/>
    <property type="match status" value="1"/>
</dbReference>
<dbReference type="PROSITE" id="PS01199">
    <property type="entry name" value="RIBOSOMAL_L1"/>
    <property type="match status" value="1"/>
</dbReference>
<evidence type="ECO:0000255" key="1">
    <source>
        <dbReference type="HAMAP-Rule" id="MF_01318"/>
    </source>
</evidence>
<evidence type="ECO:0000305" key="2"/>
<gene>
    <name evidence="1" type="primary">rplA</name>
    <name evidence="1" type="synonym">rpl1</name>
    <name type="ordered locus">PMM0203</name>
</gene>
<feature type="chain" id="PRO_0000125712" description="Large ribosomal subunit protein uL1">
    <location>
        <begin position="1"/>
        <end position="235"/>
    </location>
</feature>
<sequence length="235" mass="25591">MKKLSKRMKALSTKIEDRTYAPLEALGIVKENANAKFDETIEAHIRLGIDPKYTDQQLRTTVALPNGTGQSIKIAVITSGENVAKAKSAGADLFGEEDLVESINKGNMDFDLLIATPDMMPKVAKLGRVLGPRGLMPNPKAGTVTGDIASAIKEFKAGKLEFRADKAGIVHVRFGKASFTENALFENLKTLQESIDKNKPSGAKGKYWRSFYLTSTMGPSVQVDINALQDYQPES</sequence>
<proteinExistence type="inferred from homology"/>
<name>RL1_PROMP</name>
<comment type="function">
    <text evidence="1">Binds directly to 23S rRNA. The L1 stalk is quite mobile in the ribosome, and is involved in E site tRNA release.</text>
</comment>
<comment type="function">
    <text evidence="1">Protein L1 is also a translational repressor protein, it controls the translation of the L11 operon by binding to its mRNA.</text>
</comment>
<comment type="subunit">
    <text evidence="1">Part of the 50S ribosomal subunit.</text>
</comment>
<comment type="similarity">
    <text evidence="1">Belongs to the universal ribosomal protein uL1 family.</text>
</comment>
<accession>Q7V382</accession>